<organism>
    <name type="scientific">Xanthomonas axonopodis pv. citri (strain 306)</name>
    <dbReference type="NCBI Taxonomy" id="190486"/>
    <lineage>
        <taxon>Bacteria</taxon>
        <taxon>Pseudomonadati</taxon>
        <taxon>Pseudomonadota</taxon>
        <taxon>Gammaproteobacteria</taxon>
        <taxon>Lysobacterales</taxon>
        <taxon>Lysobacteraceae</taxon>
        <taxon>Xanthomonas</taxon>
    </lineage>
</organism>
<feature type="chain" id="PRO_0000171897" description="Putative membrane protein insertion efficiency factor">
    <location>
        <begin position="1"/>
        <end position="95"/>
    </location>
</feature>
<feature type="region of interest" description="Disordered" evidence="2">
    <location>
        <begin position="72"/>
        <end position="95"/>
    </location>
</feature>
<feature type="compositionally biased region" description="Low complexity" evidence="2">
    <location>
        <begin position="83"/>
        <end position="95"/>
    </location>
</feature>
<dbReference type="EMBL" id="AE008923">
    <property type="protein sequence ID" value="AAM37211.1"/>
    <property type="molecule type" value="Genomic_DNA"/>
</dbReference>
<dbReference type="KEGG" id="xac:XAC2359"/>
<dbReference type="eggNOG" id="COG0759">
    <property type="taxonomic scope" value="Bacteria"/>
</dbReference>
<dbReference type="HOGENOM" id="CLU_144811_2_2_6"/>
<dbReference type="Proteomes" id="UP000000576">
    <property type="component" value="Chromosome"/>
</dbReference>
<dbReference type="GO" id="GO:0005886">
    <property type="term" value="C:plasma membrane"/>
    <property type="evidence" value="ECO:0007669"/>
    <property type="project" value="UniProtKB-SubCell"/>
</dbReference>
<dbReference type="HAMAP" id="MF_00386">
    <property type="entry name" value="UPF0161_YidD"/>
    <property type="match status" value="1"/>
</dbReference>
<dbReference type="InterPro" id="IPR002696">
    <property type="entry name" value="Membr_insert_effic_factor_YidD"/>
</dbReference>
<dbReference type="NCBIfam" id="TIGR00278">
    <property type="entry name" value="membrane protein insertion efficiency factor YidD"/>
    <property type="match status" value="1"/>
</dbReference>
<dbReference type="PANTHER" id="PTHR33383">
    <property type="entry name" value="MEMBRANE PROTEIN INSERTION EFFICIENCY FACTOR-RELATED"/>
    <property type="match status" value="1"/>
</dbReference>
<dbReference type="PANTHER" id="PTHR33383:SF1">
    <property type="entry name" value="MEMBRANE PROTEIN INSERTION EFFICIENCY FACTOR-RELATED"/>
    <property type="match status" value="1"/>
</dbReference>
<dbReference type="Pfam" id="PF01809">
    <property type="entry name" value="YidD"/>
    <property type="match status" value="1"/>
</dbReference>
<dbReference type="SMART" id="SM01234">
    <property type="entry name" value="Haemolytic"/>
    <property type="match status" value="1"/>
</dbReference>
<accession>Q8PK18</accession>
<comment type="function">
    <text evidence="1">Could be involved in insertion of integral membrane proteins into the membrane.</text>
</comment>
<comment type="subcellular location">
    <subcellularLocation>
        <location evidence="1">Cell inner membrane</location>
        <topology evidence="1">Peripheral membrane protein</topology>
        <orientation evidence="1">Cytoplasmic side</orientation>
    </subcellularLocation>
</comment>
<comment type="similarity">
    <text evidence="1">Belongs to the UPF0161 family.</text>
</comment>
<keyword id="KW-0997">Cell inner membrane</keyword>
<keyword id="KW-1003">Cell membrane</keyword>
<keyword id="KW-0472">Membrane</keyword>
<gene>
    <name type="ordered locus">XAC2359</name>
</gene>
<reference key="1">
    <citation type="journal article" date="2002" name="Nature">
        <title>Comparison of the genomes of two Xanthomonas pathogens with differing host specificities.</title>
        <authorList>
            <person name="da Silva A.C.R."/>
            <person name="Ferro J.A."/>
            <person name="Reinach F.C."/>
            <person name="Farah C.S."/>
            <person name="Furlan L.R."/>
            <person name="Quaggio R.B."/>
            <person name="Monteiro-Vitorello C.B."/>
            <person name="Van Sluys M.A."/>
            <person name="Almeida N.F. Jr."/>
            <person name="Alves L.M.C."/>
            <person name="do Amaral A.M."/>
            <person name="Bertolini M.C."/>
            <person name="Camargo L.E.A."/>
            <person name="Camarotte G."/>
            <person name="Cannavan F."/>
            <person name="Cardozo J."/>
            <person name="Chambergo F."/>
            <person name="Ciapina L.P."/>
            <person name="Cicarelli R.M.B."/>
            <person name="Coutinho L.L."/>
            <person name="Cursino-Santos J.R."/>
            <person name="El-Dorry H."/>
            <person name="Faria J.B."/>
            <person name="Ferreira A.J.S."/>
            <person name="Ferreira R.C.C."/>
            <person name="Ferro M.I.T."/>
            <person name="Formighieri E.F."/>
            <person name="Franco M.C."/>
            <person name="Greggio C.C."/>
            <person name="Gruber A."/>
            <person name="Katsuyama A.M."/>
            <person name="Kishi L.T."/>
            <person name="Leite R.P."/>
            <person name="Lemos E.G.M."/>
            <person name="Lemos M.V.F."/>
            <person name="Locali E.C."/>
            <person name="Machado M.A."/>
            <person name="Madeira A.M.B.N."/>
            <person name="Martinez-Rossi N.M."/>
            <person name="Martins E.C."/>
            <person name="Meidanis J."/>
            <person name="Menck C.F.M."/>
            <person name="Miyaki C.Y."/>
            <person name="Moon D.H."/>
            <person name="Moreira L.M."/>
            <person name="Novo M.T.M."/>
            <person name="Okura V.K."/>
            <person name="Oliveira M.C."/>
            <person name="Oliveira V.R."/>
            <person name="Pereira H.A."/>
            <person name="Rossi A."/>
            <person name="Sena J.A.D."/>
            <person name="Silva C."/>
            <person name="de Souza R.F."/>
            <person name="Spinola L.A.F."/>
            <person name="Takita M.A."/>
            <person name="Tamura R.E."/>
            <person name="Teixeira E.C."/>
            <person name="Tezza R.I.D."/>
            <person name="Trindade dos Santos M."/>
            <person name="Truffi D."/>
            <person name="Tsai S.M."/>
            <person name="White F.F."/>
            <person name="Setubal J.C."/>
            <person name="Kitajima J.P."/>
        </authorList>
    </citation>
    <scope>NUCLEOTIDE SEQUENCE [LARGE SCALE GENOMIC DNA]</scope>
    <source>
        <strain>306</strain>
    </source>
</reference>
<protein>
    <recommendedName>
        <fullName evidence="1">Putative membrane protein insertion efficiency factor</fullName>
    </recommendedName>
</protein>
<proteinExistence type="inferred from homology"/>
<name>YIDD_XANAC</name>
<evidence type="ECO:0000255" key="1">
    <source>
        <dbReference type="HAMAP-Rule" id="MF_00386"/>
    </source>
</evidence>
<evidence type="ECO:0000256" key="2">
    <source>
        <dbReference type="SAM" id="MobiDB-lite"/>
    </source>
</evidence>
<sequence>MAYHWQVISRLLIALLRVYKLVISPLLGPRCRFAPSCSDYAMTAIGRFGPLRGSWLAARRLGRCHPFHPGGFDPVPDAPTSPSPSSSCSCKGPHP</sequence>